<organism>
    <name type="scientific">Hamiltonella defensa subsp. Acyrthosiphon pisum (strain 5AT)</name>
    <dbReference type="NCBI Taxonomy" id="572265"/>
    <lineage>
        <taxon>Bacteria</taxon>
        <taxon>Pseudomonadati</taxon>
        <taxon>Pseudomonadota</taxon>
        <taxon>Gammaproteobacteria</taxon>
        <taxon>Enterobacterales</taxon>
        <taxon>Enterobacteriaceae</taxon>
        <taxon>aphid secondary symbionts</taxon>
        <taxon>Candidatus Hamiltonella</taxon>
    </lineage>
</organism>
<protein>
    <recommendedName>
        <fullName evidence="1">Negative modulator of initiation of replication</fullName>
    </recommendedName>
</protein>
<proteinExistence type="inferred from homology"/>
<keyword id="KW-0963">Cytoplasm</keyword>
<keyword id="KW-0236">DNA replication inhibitor</keyword>
<keyword id="KW-0238">DNA-binding</keyword>
<comment type="function">
    <text evidence="1">Negative regulator of replication initiation, which contributes to regulation of DNA replication and ensures that replication initiation occurs exactly once per chromosome per cell cycle. Binds to pairs of hemimethylated GATC sequences in the oriC region, thus preventing assembly of replication proteins and re-initiation at newly replicated origins. Repression is relieved when the region becomes fully methylated.</text>
</comment>
<comment type="subunit">
    <text evidence="1">Homodimer. Polymerizes to form helical filaments.</text>
</comment>
<comment type="subcellular location">
    <subcellularLocation>
        <location evidence="1">Cytoplasm</location>
    </subcellularLocation>
</comment>
<comment type="similarity">
    <text evidence="1">Belongs to the SeqA family.</text>
</comment>
<accession>C4K392</accession>
<gene>
    <name evidence="1" type="primary">seqA</name>
    <name type="ordered locus">HDEF_0270</name>
</gene>
<evidence type="ECO:0000255" key="1">
    <source>
        <dbReference type="HAMAP-Rule" id="MF_00908"/>
    </source>
</evidence>
<sequence>MKLIEVDEELYRYIAAHTQYIGESASEILRRMFSLTQKKQTEIKIKKTPKIHQSSVKATLFSRIQILNDILSSETYASKNKVIARFMLILSTLYDLDSKAFSVAAESLQGRKRAYFSGSKNFLLKNGTHTKPKQIPKTPYWVITNTNSERKRTMLKNMMIAMKFPNEIAKKVSQTI</sequence>
<feature type="chain" id="PRO_0000413925" description="Negative modulator of initiation of replication">
    <location>
        <begin position="1"/>
        <end position="176"/>
    </location>
</feature>
<name>SEQA_HAMD5</name>
<dbReference type="EMBL" id="CP001277">
    <property type="protein sequence ID" value="ACQ67035.1"/>
    <property type="molecule type" value="Genomic_DNA"/>
</dbReference>
<dbReference type="RefSeq" id="WP_012737998.1">
    <property type="nucleotide sequence ID" value="NC_012751.1"/>
</dbReference>
<dbReference type="SMR" id="C4K392"/>
<dbReference type="STRING" id="572265.HDEF_0270"/>
<dbReference type="GeneID" id="66260186"/>
<dbReference type="KEGG" id="hde:HDEF_0270"/>
<dbReference type="eggNOG" id="COG3057">
    <property type="taxonomic scope" value="Bacteria"/>
</dbReference>
<dbReference type="HOGENOM" id="CLU_099733_0_0_6"/>
<dbReference type="Proteomes" id="UP000002334">
    <property type="component" value="Chromosome"/>
</dbReference>
<dbReference type="GO" id="GO:0005737">
    <property type="term" value="C:cytoplasm"/>
    <property type="evidence" value="ECO:0007669"/>
    <property type="project" value="UniProtKB-SubCell"/>
</dbReference>
<dbReference type="GO" id="GO:0043565">
    <property type="term" value="F:sequence-specific DNA binding"/>
    <property type="evidence" value="ECO:0007669"/>
    <property type="project" value="UniProtKB-ARBA"/>
</dbReference>
<dbReference type="GO" id="GO:0032297">
    <property type="term" value="P:negative regulation of DNA-templated DNA replication initiation"/>
    <property type="evidence" value="ECO:0007669"/>
    <property type="project" value="UniProtKB-UniRule"/>
</dbReference>
<dbReference type="GO" id="GO:0006355">
    <property type="term" value="P:regulation of DNA-templated transcription"/>
    <property type="evidence" value="ECO:0007669"/>
    <property type="project" value="InterPro"/>
</dbReference>
<dbReference type="Gene3D" id="1.10.1220.10">
    <property type="entry name" value="Met repressor-like"/>
    <property type="match status" value="1"/>
</dbReference>
<dbReference type="Gene3D" id="1.20.1380.10">
    <property type="entry name" value="Replication modulator SeqA, C-terminal DNA-binding domain"/>
    <property type="match status" value="1"/>
</dbReference>
<dbReference type="HAMAP" id="MF_00908">
    <property type="entry name" value="SeqA"/>
    <property type="match status" value="1"/>
</dbReference>
<dbReference type="InterPro" id="IPR013321">
    <property type="entry name" value="Arc_rbn_hlx_hlx"/>
</dbReference>
<dbReference type="InterPro" id="IPR010985">
    <property type="entry name" value="Ribbon_hlx_hlx"/>
</dbReference>
<dbReference type="InterPro" id="IPR005621">
    <property type="entry name" value="SeqA"/>
</dbReference>
<dbReference type="InterPro" id="IPR026577">
    <property type="entry name" value="SeqA_DNA-bd_C"/>
</dbReference>
<dbReference type="InterPro" id="IPR036835">
    <property type="entry name" value="SeqA_DNA-bd_C_sf"/>
</dbReference>
<dbReference type="InterPro" id="IPR033761">
    <property type="entry name" value="SeqA_N"/>
</dbReference>
<dbReference type="NCBIfam" id="NF008389">
    <property type="entry name" value="PRK11187.1"/>
    <property type="match status" value="1"/>
</dbReference>
<dbReference type="Pfam" id="PF03925">
    <property type="entry name" value="SeqA"/>
    <property type="match status" value="1"/>
</dbReference>
<dbReference type="Pfam" id="PF17206">
    <property type="entry name" value="SeqA_N"/>
    <property type="match status" value="1"/>
</dbReference>
<dbReference type="PIRSF" id="PIRSF019401">
    <property type="entry name" value="SeqA"/>
    <property type="match status" value="1"/>
</dbReference>
<dbReference type="SUPFAM" id="SSF82808">
    <property type="entry name" value="Replication modulator SeqA, C-terminal DNA-binding domain"/>
    <property type="match status" value="1"/>
</dbReference>
<dbReference type="SUPFAM" id="SSF47598">
    <property type="entry name" value="Ribbon-helix-helix"/>
    <property type="match status" value="1"/>
</dbReference>
<reference key="1">
    <citation type="journal article" date="2009" name="Proc. Natl. Acad. Sci. U.S.A.">
        <title>Hamiltonella defensa, genome evolution of protective bacterial endosymbiont from pathogenic ancestors.</title>
        <authorList>
            <person name="Degnan P.H."/>
            <person name="Yu Y."/>
            <person name="Sisneros N."/>
            <person name="Wing R.A."/>
            <person name="Moran N.A."/>
        </authorList>
    </citation>
    <scope>NUCLEOTIDE SEQUENCE [LARGE SCALE GENOMIC DNA]</scope>
    <source>
        <strain>5AT</strain>
    </source>
</reference>